<proteinExistence type="inferred from homology"/>
<evidence type="ECO:0000255" key="1">
    <source>
        <dbReference type="HAMAP-Rule" id="MF_00251"/>
    </source>
</evidence>
<evidence type="ECO:0000305" key="2"/>
<comment type="similarity">
    <text evidence="1">Belongs to the bacterial ribosomal protein bL36 family.</text>
</comment>
<gene>
    <name evidence="1" type="primary">rpmJ</name>
    <name type="ordered locus">Avin_06460</name>
</gene>
<protein>
    <recommendedName>
        <fullName evidence="1">Large ribosomal subunit protein bL36</fullName>
    </recommendedName>
    <alternativeName>
        <fullName evidence="2">50S ribosomal protein L36</fullName>
    </alternativeName>
</protein>
<feature type="chain" id="PRO_1000204540" description="Large ribosomal subunit protein bL36">
    <location>
        <begin position="1"/>
        <end position="38"/>
    </location>
</feature>
<organism>
    <name type="scientific">Azotobacter vinelandii (strain DJ / ATCC BAA-1303)</name>
    <dbReference type="NCBI Taxonomy" id="322710"/>
    <lineage>
        <taxon>Bacteria</taxon>
        <taxon>Pseudomonadati</taxon>
        <taxon>Pseudomonadota</taxon>
        <taxon>Gammaproteobacteria</taxon>
        <taxon>Pseudomonadales</taxon>
        <taxon>Pseudomonadaceae</taxon>
        <taxon>Azotobacter</taxon>
    </lineage>
</organism>
<sequence length="38" mass="4450">MKVRASVKKLCRNCKIIRRDGVVRVICSTEPRHKQRQG</sequence>
<name>RL36_AZOVD</name>
<keyword id="KW-0687">Ribonucleoprotein</keyword>
<keyword id="KW-0689">Ribosomal protein</keyword>
<accession>C1DKN4</accession>
<dbReference type="EMBL" id="CP001157">
    <property type="protein sequence ID" value="ACO76897.1"/>
    <property type="molecule type" value="Genomic_DNA"/>
</dbReference>
<dbReference type="RefSeq" id="WP_012699323.1">
    <property type="nucleotide sequence ID" value="NC_012560.1"/>
</dbReference>
<dbReference type="SMR" id="C1DKN4"/>
<dbReference type="STRING" id="322710.Avin_06460"/>
<dbReference type="EnsemblBacteria" id="ACO76897">
    <property type="protein sequence ID" value="ACO76897"/>
    <property type="gene ID" value="Avin_06460"/>
</dbReference>
<dbReference type="GeneID" id="88184057"/>
<dbReference type="KEGG" id="avn:Avin_06460"/>
<dbReference type="eggNOG" id="COG0257">
    <property type="taxonomic scope" value="Bacteria"/>
</dbReference>
<dbReference type="HOGENOM" id="CLU_135723_6_2_6"/>
<dbReference type="OrthoDB" id="9802520at2"/>
<dbReference type="Proteomes" id="UP000002424">
    <property type="component" value="Chromosome"/>
</dbReference>
<dbReference type="GO" id="GO:0005737">
    <property type="term" value="C:cytoplasm"/>
    <property type="evidence" value="ECO:0007669"/>
    <property type="project" value="UniProtKB-ARBA"/>
</dbReference>
<dbReference type="GO" id="GO:1990904">
    <property type="term" value="C:ribonucleoprotein complex"/>
    <property type="evidence" value="ECO:0007669"/>
    <property type="project" value="UniProtKB-KW"/>
</dbReference>
<dbReference type="GO" id="GO:0005840">
    <property type="term" value="C:ribosome"/>
    <property type="evidence" value="ECO:0007669"/>
    <property type="project" value="UniProtKB-KW"/>
</dbReference>
<dbReference type="GO" id="GO:0003735">
    <property type="term" value="F:structural constituent of ribosome"/>
    <property type="evidence" value="ECO:0007669"/>
    <property type="project" value="InterPro"/>
</dbReference>
<dbReference type="GO" id="GO:0006412">
    <property type="term" value="P:translation"/>
    <property type="evidence" value="ECO:0007669"/>
    <property type="project" value="UniProtKB-UniRule"/>
</dbReference>
<dbReference type="HAMAP" id="MF_00251">
    <property type="entry name" value="Ribosomal_bL36"/>
    <property type="match status" value="1"/>
</dbReference>
<dbReference type="InterPro" id="IPR000473">
    <property type="entry name" value="Ribosomal_bL36"/>
</dbReference>
<dbReference type="InterPro" id="IPR035977">
    <property type="entry name" value="Ribosomal_bL36_sp"/>
</dbReference>
<dbReference type="NCBIfam" id="TIGR01022">
    <property type="entry name" value="rpmJ_bact"/>
    <property type="match status" value="1"/>
</dbReference>
<dbReference type="PANTHER" id="PTHR42888">
    <property type="entry name" value="50S RIBOSOMAL PROTEIN L36, CHLOROPLASTIC"/>
    <property type="match status" value="1"/>
</dbReference>
<dbReference type="PANTHER" id="PTHR42888:SF1">
    <property type="entry name" value="LARGE RIBOSOMAL SUBUNIT PROTEIN BL36C"/>
    <property type="match status" value="1"/>
</dbReference>
<dbReference type="Pfam" id="PF00444">
    <property type="entry name" value="Ribosomal_L36"/>
    <property type="match status" value="1"/>
</dbReference>
<dbReference type="SUPFAM" id="SSF57840">
    <property type="entry name" value="Ribosomal protein L36"/>
    <property type="match status" value="1"/>
</dbReference>
<dbReference type="PROSITE" id="PS00828">
    <property type="entry name" value="RIBOSOMAL_L36"/>
    <property type="match status" value="1"/>
</dbReference>
<reference key="1">
    <citation type="journal article" date="2009" name="J. Bacteriol.">
        <title>Genome sequence of Azotobacter vinelandii, an obligate aerobe specialized to support diverse anaerobic metabolic processes.</title>
        <authorList>
            <person name="Setubal J.C."/>
            <person name="Dos Santos P."/>
            <person name="Goldman B.S."/>
            <person name="Ertesvaag H."/>
            <person name="Espin G."/>
            <person name="Rubio L.M."/>
            <person name="Valla S."/>
            <person name="Almeida N.F."/>
            <person name="Balasubramanian D."/>
            <person name="Cromes L."/>
            <person name="Curatti L."/>
            <person name="Du Z."/>
            <person name="Godsy E."/>
            <person name="Goodner B."/>
            <person name="Hellner-Burris K."/>
            <person name="Hernandez J.A."/>
            <person name="Houmiel K."/>
            <person name="Imperial J."/>
            <person name="Kennedy C."/>
            <person name="Larson T.J."/>
            <person name="Latreille P."/>
            <person name="Ligon L.S."/>
            <person name="Lu J."/>
            <person name="Maerk M."/>
            <person name="Miller N.M."/>
            <person name="Norton S."/>
            <person name="O'Carroll I.P."/>
            <person name="Paulsen I."/>
            <person name="Raulfs E.C."/>
            <person name="Roemer R."/>
            <person name="Rosser J."/>
            <person name="Segura D."/>
            <person name="Slater S."/>
            <person name="Stricklin S.L."/>
            <person name="Studholme D.J."/>
            <person name="Sun J."/>
            <person name="Viana C.J."/>
            <person name="Wallin E."/>
            <person name="Wang B."/>
            <person name="Wheeler C."/>
            <person name="Zhu H."/>
            <person name="Dean D.R."/>
            <person name="Dixon R."/>
            <person name="Wood D."/>
        </authorList>
    </citation>
    <scope>NUCLEOTIDE SEQUENCE [LARGE SCALE GENOMIC DNA]</scope>
    <source>
        <strain>DJ / ATCC BAA-1303</strain>
    </source>
</reference>